<reference key="1">
    <citation type="journal article" date="1996" name="EMBO J.">
        <title>Complete nucleotide sequence of Saccharomyces cerevisiae chromosome X.</title>
        <authorList>
            <person name="Galibert F."/>
            <person name="Alexandraki D."/>
            <person name="Baur A."/>
            <person name="Boles E."/>
            <person name="Chalwatzis N."/>
            <person name="Chuat J.-C."/>
            <person name="Coster F."/>
            <person name="Cziepluch C."/>
            <person name="de Haan M."/>
            <person name="Domdey H."/>
            <person name="Durand P."/>
            <person name="Entian K.-D."/>
            <person name="Gatius M."/>
            <person name="Goffeau A."/>
            <person name="Grivell L.A."/>
            <person name="Hennemann A."/>
            <person name="Herbert C.J."/>
            <person name="Heumann K."/>
            <person name="Hilger F."/>
            <person name="Hollenberg C.P."/>
            <person name="Huang M.-E."/>
            <person name="Jacq C."/>
            <person name="Jauniaux J.-C."/>
            <person name="Katsoulou C."/>
            <person name="Kirchrath L."/>
            <person name="Kleine K."/>
            <person name="Kordes E."/>
            <person name="Koetter P."/>
            <person name="Liebl S."/>
            <person name="Louis E.J."/>
            <person name="Manus V."/>
            <person name="Mewes H.-W."/>
            <person name="Miosga T."/>
            <person name="Obermaier B."/>
            <person name="Perea J."/>
            <person name="Pohl T.M."/>
            <person name="Portetelle D."/>
            <person name="Pujol A."/>
            <person name="Purnelle B."/>
            <person name="Ramezani Rad M."/>
            <person name="Rasmussen S.W."/>
            <person name="Rose M."/>
            <person name="Rossau R."/>
            <person name="Schaaff-Gerstenschlaeger I."/>
            <person name="Smits P.H.M."/>
            <person name="Scarcez T."/>
            <person name="Soriano N."/>
            <person name="To Van D."/>
            <person name="Tzermia M."/>
            <person name="Van Broekhoven A."/>
            <person name="Vandenbol M."/>
            <person name="Wedler H."/>
            <person name="von Wettstein D."/>
            <person name="Wambutt R."/>
            <person name="Zagulski M."/>
            <person name="Zollner A."/>
            <person name="Karpfinger-Hartl L."/>
        </authorList>
    </citation>
    <scope>NUCLEOTIDE SEQUENCE [LARGE SCALE GENOMIC DNA]</scope>
    <source>
        <strain>ATCC 204508 / S288c</strain>
    </source>
</reference>
<reference key="2">
    <citation type="journal article" date="2014" name="G3 (Bethesda)">
        <title>The reference genome sequence of Saccharomyces cerevisiae: Then and now.</title>
        <authorList>
            <person name="Engel S.R."/>
            <person name="Dietrich F.S."/>
            <person name="Fisk D.G."/>
            <person name="Binkley G."/>
            <person name="Balakrishnan R."/>
            <person name="Costanzo M.C."/>
            <person name="Dwight S.S."/>
            <person name="Hitz B.C."/>
            <person name="Karra K."/>
            <person name="Nash R.S."/>
            <person name="Weng S."/>
            <person name="Wong E.D."/>
            <person name="Lloyd P."/>
            <person name="Skrzypek M.S."/>
            <person name="Miyasato S.R."/>
            <person name="Simison M."/>
            <person name="Cherry J.M."/>
        </authorList>
    </citation>
    <scope>GENOME REANNOTATION</scope>
    <source>
        <strain>ATCC 204508 / S288c</strain>
    </source>
</reference>
<reference key="3">
    <citation type="journal article" date="2007" name="Genome Res.">
        <title>Approaching a complete repository of sequence-verified protein-encoding clones for Saccharomyces cerevisiae.</title>
        <authorList>
            <person name="Hu Y."/>
            <person name="Rolfs A."/>
            <person name="Bhullar B."/>
            <person name="Murthy T.V.S."/>
            <person name="Zhu C."/>
            <person name="Berger M.F."/>
            <person name="Camargo A.A."/>
            <person name="Kelley F."/>
            <person name="McCarron S."/>
            <person name="Jepson D."/>
            <person name="Richardson A."/>
            <person name="Raphael J."/>
            <person name="Moreira D."/>
            <person name="Taycher E."/>
            <person name="Zuo D."/>
            <person name="Mohr S."/>
            <person name="Kane M.F."/>
            <person name="Williamson J."/>
            <person name="Simpson A.J.G."/>
            <person name="Bulyk M.L."/>
            <person name="Harlow E."/>
            <person name="Marsischky G."/>
            <person name="Kolodner R.D."/>
            <person name="LaBaer J."/>
        </authorList>
    </citation>
    <scope>NUCLEOTIDE SEQUENCE [GENOMIC DNA]</scope>
    <source>
        <strain>ATCC 204508 / S288c</strain>
    </source>
</reference>
<reference key="4">
    <citation type="journal article" date="2003" name="Nat. Cell Biol.">
        <title>Yeast epsin-related proteins required for Golgi-endosome traffic define a gamma-adaptin ear-binding motif.</title>
        <authorList>
            <person name="Duncan M.C."/>
            <person name="Costaguta G."/>
            <person name="Payne G.S."/>
        </authorList>
    </citation>
    <scope>FUNCTION</scope>
    <scope>INTERACTION WITH GGA2</scope>
    <scope>SUBCELLULAR LOCATION</scope>
    <scope>MUTAGENESIS OF PHE-272 AND PHE-275</scope>
</reference>
<reference key="5">
    <citation type="journal article" date="2004" name="Mol. Biol. Cell">
        <title>Ent5p is required with Ent3p and Vps27p for ubiquitin-dependent protein sorting into the multivesicular body.</title>
        <authorList>
            <person name="Eugster A."/>
            <person name="Pecheur E.-I."/>
            <person name="Michel F."/>
            <person name="Winsor B."/>
            <person name="Letourneur F."/>
            <person name="Friant S."/>
        </authorList>
    </citation>
    <scope>FUNCTION</scope>
    <scope>INTERACTION WITH VPS27</scope>
</reference>
<reference key="6">
    <citation type="journal article" date="2007" name="J. Proteome Res.">
        <title>Large-scale phosphorylation analysis of alpha-factor-arrested Saccharomyces cerevisiae.</title>
        <authorList>
            <person name="Li X."/>
            <person name="Gerber S.A."/>
            <person name="Rudner A.D."/>
            <person name="Beausoleil S.A."/>
            <person name="Haas W."/>
            <person name="Villen J."/>
            <person name="Elias J.E."/>
            <person name="Gygi S.P."/>
        </authorList>
    </citation>
    <scope>PHOSPHORYLATION [LARGE SCALE ANALYSIS] AT SER-203</scope>
    <scope>IDENTIFICATION BY MASS SPECTROMETRY [LARGE SCALE ANALYSIS]</scope>
    <source>
        <strain>ADR376</strain>
    </source>
</reference>
<reference key="7">
    <citation type="journal article" date="2008" name="Mol. Cell. Proteomics">
        <title>A multidimensional chromatography technology for in-depth phosphoproteome analysis.</title>
        <authorList>
            <person name="Albuquerque C.P."/>
            <person name="Smolka M.B."/>
            <person name="Payne S.H."/>
            <person name="Bafna V."/>
            <person name="Eng J."/>
            <person name="Zhou H."/>
        </authorList>
    </citation>
    <scope>PHOSPHORYLATION [LARGE SCALE ANALYSIS] AT SER-203</scope>
    <scope>IDENTIFICATION BY MASS SPECTROMETRY [LARGE SCALE ANALYSIS]</scope>
</reference>
<reference key="8">
    <citation type="journal article" date="2009" name="Science">
        <title>Global analysis of Cdk1 substrate phosphorylation sites provides insights into evolution.</title>
        <authorList>
            <person name="Holt L.J."/>
            <person name="Tuch B.B."/>
            <person name="Villen J."/>
            <person name="Johnson A.D."/>
            <person name="Gygi S.P."/>
            <person name="Morgan D.O."/>
        </authorList>
    </citation>
    <scope>PHOSPHORYLATION [LARGE SCALE ANALYSIS] AT SER-196; SER-198; SER-203; SER-212 AND SER-223</scope>
    <scope>IDENTIFICATION BY MASS SPECTROMETRY [LARGE SCALE ANALYSIS]</scope>
</reference>
<reference key="9">
    <citation type="journal article" date="2012" name="Proc. Natl. Acad. Sci. U.S.A.">
        <title>N-terminal acetylome analyses and functional insights of the N-terminal acetyltransferase NatB.</title>
        <authorList>
            <person name="Van Damme P."/>
            <person name="Lasa M."/>
            <person name="Polevoda B."/>
            <person name="Gazquez C."/>
            <person name="Elosegui-Artola A."/>
            <person name="Kim D.S."/>
            <person name="De Juan-Pardo E."/>
            <person name="Demeyer K."/>
            <person name="Hole K."/>
            <person name="Larrea E."/>
            <person name="Timmerman E."/>
            <person name="Prieto J."/>
            <person name="Arnesen T."/>
            <person name="Sherman F."/>
            <person name="Gevaert K."/>
            <person name="Aldabe R."/>
        </authorList>
    </citation>
    <scope>ACETYLATION [LARGE SCALE ANALYSIS] AT SER-2</scope>
    <scope>CLEAVAGE OF INITIATOR METHIONINE [LARGE SCALE ANALYSIS]</scope>
    <scope>IDENTIFICATION BY MASS SPECTROMETRY [LARGE SCALE ANALYSIS]</scope>
</reference>
<accession>P47160</accession>
<accession>D6VWU4</accession>
<keyword id="KW-0002">3D-structure</keyword>
<keyword id="KW-0007">Acetylation</keyword>
<keyword id="KW-0963">Cytoplasm</keyword>
<keyword id="KW-0968">Cytoplasmic vesicle</keyword>
<keyword id="KW-0333">Golgi apparatus</keyword>
<keyword id="KW-0446">Lipid-binding</keyword>
<keyword id="KW-0472">Membrane</keyword>
<keyword id="KW-0597">Phosphoprotein</keyword>
<keyword id="KW-0653">Protein transport</keyword>
<keyword id="KW-1185">Reference proteome</keyword>
<keyword id="KW-0813">Transport</keyword>
<dbReference type="EMBL" id="Z49625">
    <property type="protein sequence ID" value="CAA89656.1"/>
    <property type="molecule type" value="Genomic_DNA"/>
</dbReference>
<dbReference type="EMBL" id="AY558084">
    <property type="protein sequence ID" value="AAS56410.1"/>
    <property type="molecule type" value="Genomic_DNA"/>
</dbReference>
<dbReference type="EMBL" id="BK006943">
    <property type="protein sequence ID" value="DAA08910.1"/>
    <property type="molecule type" value="Genomic_DNA"/>
</dbReference>
<dbReference type="PIR" id="S57148">
    <property type="entry name" value="S57148"/>
</dbReference>
<dbReference type="RefSeq" id="NP_012659.1">
    <property type="nucleotide sequence ID" value="NM_001181783.1"/>
</dbReference>
<dbReference type="PDB" id="3ONK">
    <property type="method" value="X-ray"/>
    <property type="resolution" value="2.09 A"/>
    <property type="chains" value="A=28-170"/>
</dbReference>
<dbReference type="PDB" id="3ONL">
    <property type="method" value="X-ray"/>
    <property type="resolution" value="2.20 A"/>
    <property type="chains" value="A/B=28-170"/>
</dbReference>
<dbReference type="PDBsum" id="3ONK"/>
<dbReference type="PDBsum" id="3ONL"/>
<dbReference type="SMR" id="P47160"/>
<dbReference type="BioGRID" id="33881">
    <property type="interactions" value="276"/>
</dbReference>
<dbReference type="DIP" id="DIP-1304N"/>
<dbReference type="ELM" id="P47160"/>
<dbReference type="FunCoup" id="P47160">
    <property type="interactions" value="204"/>
</dbReference>
<dbReference type="IntAct" id="P47160">
    <property type="interactions" value="8"/>
</dbReference>
<dbReference type="MINT" id="P47160"/>
<dbReference type="STRING" id="4932.YJR125C"/>
<dbReference type="iPTMnet" id="P47160"/>
<dbReference type="PaxDb" id="4932-YJR125C"/>
<dbReference type="PeptideAtlas" id="P47160"/>
<dbReference type="EnsemblFungi" id="YJR125C_mRNA">
    <property type="protein sequence ID" value="YJR125C"/>
    <property type="gene ID" value="YJR125C"/>
</dbReference>
<dbReference type="GeneID" id="853589"/>
<dbReference type="KEGG" id="sce:YJR125C"/>
<dbReference type="AGR" id="SGD:S000003886"/>
<dbReference type="SGD" id="S000003886">
    <property type="gene designation" value="ENT3"/>
</dbReference>
<dbReference type="VEuPathDB" id="FungiDB:YJR125C"/>
<dbReference type="eggNOG" id="KOG2056">
    <property type="taxonomic scope" value="Eukaryota"/>
</dbReference>
<dbReference type="GeneTree" id="ENSGT00940000165824"/>
<dbReference type="HOGENOM" id="CLU_040577_1_0_1"/>
<dbReference type="InParanoid" id="P47160"/>
<dbReference type="OMA" id="QGTYNFR"/>
<dbReference type="OrthoDB" id="4033880at2759"/>
<dbReference type="BioCyc" id="YEAST:G3O-31746-MONOMER"/>
<dbReference type="BioGRID-ORCS" id="853589">
    <property type="hits" value="2 hits in 10 CRISPR screens"/>
</dbReference>
<dbReference type="EvolutionaryTrace" id="P47160"/>
<dbReference type="PRO" id="PR:P47160"/>
<dbReference type="Proteomes" id="UP000002311">
    <property type="component" value="Chromosome X"/>
</dbReference>
<dbReference type="RNAct" id="P47160">
    <property type="molecule type" value="protein"/>
</dbReference>
<dbReference type="GO" id="GO:0030125">
    <property type="term" value="C:clathrin vesicle coat"/>
    <property type="evidence" value="ECO:0000314"/>
    <property type="project" value="SGD"/>
</dbReference>
<dbReference type="GO" id="GO:0005829">
    <property type="term" value="C:cytosol"/>
    <property type="evidence" value="ECO:0007669"/>
    <property type="project" value="GOC"/>
</dbReference>
<dbReference type="GO" id="GO:0005768">
    <property type="term" value="C:endosome"/>
    <property type="evidence" value="ECO:0000314"/>
    <property type="project" value="SGD"/>
</dbReference>
<dbReference type="GO" id="GO:0005794">
    <property type="term" value="C:Golgi apparatus"/>
    <property type="evidence" value="ECO:0007669"/>
    <property type="project" value="UniProtKB-SubCell"/>
</dbReference>
<dbReference type="GO" id="GO:0005886">
    <property type="term" value="C:plasma membrane"/>
    <property type="evidence" value="ECO:0000318"/>
    <property type="project" value="GO_Central"/>
</dbReference>
<dbReference type="GO" id="GO:0030276">
    <property type="term" value="F:clathrin binding"/>
    <property type="evidence" value="ECO:0000314"/>
    <property type="project" value="SGD"/>
</dbReference>
<dbReference type="GO" id="GO:0080025">
    <property type="term" value="F:phosphatidylinositol-3,5-bisphosphate binding"/>
    <property type="evidence" value="ECO:0000314"/>
    <property type="project" value="SGD"/>
</dbReference>
<dbReference type="GO" id="GO:0032266">
    <property type="term" value="F:phosphatidylinositol-3-phosphate binding"/>
    <property type="evidence" value="ECO:0000314"/>
    <property type="project" value="SGD"/>
</dbReference>
<dbReference type="GO" id="GO:0005543">
    <property type="term" value="F:phospholipid binding"/>
    <property type="evidence" value="ECO:0000318"/>
    <property type="project" value="GO_Central"/>
</dbReference>
<dbReference type="GO" id="GO:0030036">
    <property type="term" value="P:actin cytoskeleton organization"/>
    <property type="evidence" value="ECO:0000315"/>
    <property type="project" value="SGD"/>
</dbReference>
<dbReference type="GO" id="GO:0034498">
    <property type="term" value="P:early endosome to Golgi transport"/>
    <property type="evidence" value="ECO:0000316"/>
    <property type="project" value="SGD"/>
</dbReference>
<dbReference type="GO" id="GO:0006897">
    <property type="term" value="P:endocytosis"/>
    <property type="evidence" value="ECO:0000318"/>
    <property type="project" value="GO_Central"/>
</dbReference>
<dbReference type="GO" id="GO:0006895">
    <property type="term" value="P:Golgi to endosome transport"/>
    <property type="evidence" value="ECO:0000315"/>
    <property type="project" value="SGD"/>
</dbReference>
<dbReference type="GO" id="GO:0032511">
    <property type="term" value="P:late endosome to vacuole transport via multivesicular body sorting pathway"/>
    <property type="evidence" value="ECO:0000315"/>
    <property type="project" value="SGD"/>
</dbReference>
<dbReference type="GO" id="GO:0071985">
    <property type="term" value="P:multivesicular body sorting pathway"/>
    <property type="evidence" value="ECO:0000315"/>
    <property type="project" value="SGD"/>
</dbReference>
<dbReference type="GO" id="GO:0015031">
    <property type="term" value="P:protein transport"/>
    <property type="evidence" value="ECO:0007669"/>
    <property type="project" value="UniProtKB-KW"/>
</dbReference>
<dbReference type="CDD" id="cd16992">
    <property type="entry name" value="ENTH_Ent3"/>
    <property type="match status" value="1"/>
</dbReference>
<dbReference type="FunFam" id="1.25.40.90:FF:000006">
    <property type="entry name" value="Clathrin interactor 1"/>
    <property type="match status" value="1"/>
</dbReference>
<dbReference type="Gene3D" id="1.25.40.90">
    <property type="match status" value="1"/>
</dbReference>
<dbReference type="InterPro" id="IPR013809">
    <property type="entry name" value="ENTH"/>
</dbReference>
<dbReference type="InterPro" id="IPR008942">
    <property type="entry name" value="ENTH_VHS"/>
</dbReference>
<dbReference type="PANTHER" id="PTHR12276:SF45">
    <property type="entry name" value="CLATHRIN INTERACTOR 1"/>
    <property type="match status" value="1"/>
</dbReference>
<dbReference type="PANTHER" id="PTHR12276">
    <property type="entry name" value="EPSIN/ENT-RELATED"/>
    <property type="match status" value="1"/>
</dbReference>
<dbReference type="Pfam" id="PF01417">
    <property type="entry name" value="ENTH"/>
    <property type="match status" value="1"/>
</dbReference>
<dbReference type="SMART" id="SM00273">
    <property type="entry name" value="ENTH"/>
    <property type="match status" value="1"/>
</dbReference>
<dbReference type="SUPFAM" id="SSF48464">
    <property type="entry name" value="ENTH/VHS domain"/>
    <property type="match status" value="1"/>
</dbReference>
<dbReference type="PROSITE" id="PS50942">
    <property type="entry name" value="ENTH"/>
    <property type="match status" value="1"/>
</dbReference>
<proteinExistence type="evidence at protein level"/>
<sequence>MSLEDTLANMSLYDAKKYFRKAQNVVFNYTEMEGKVREATNNEPWGASSTLMDQISQGTYNFREREEILSMIFRRFTEKAGSEWRQIYKALQLLDYLIKHGSERFIDDTRNSINLIRILETFHYIDSQGRDQGINVRTRVKALIELLSDDNKIRAERKKARETAKKYKGVAGGSASADGSLNSKAGFTSTKVHGISVSADFDSDNEDNEDGSFSQNGYNDNASRATSTPGQGKQEPEDFVDFFSSESSKPSKELIQEDEKKADEEEDDDDEFSEFQSAVPVTNPANSFNLLNTSPIEGMPATTSSMPFYNSSTTDQGKITPAIAEPKKVDPFSSLFSTAKASAEAPSAPKASQAKAAASNPVSNSTTALSTDQDDDDEFGEMHGGAVQQEQNTNNNHTSSKEIDLLSF</sequence>
<gene>
    <name type="primary">ENT3</name>
    <name type="ordered locus">YJR125C</name>
    <name type="ORF">J2048</name>
</gene>
<organism>
    <name type="scientific">Saccharomyces cerevisiae (strain ATCC 204508 / S288c)</name>
    <name type="common">Baker's yeast</name>
    <dbReference type="NCBI Taxonomy" id="559292"/>
    <lineage>
        <taxon>Eukaryota</taxon>
        <taxon>Fungi</taxon>
        <taxon>Dikarya</taxon>
        <taxon>Ascomycota</taxon>
        <taxon>Saccharomycotina</taxon>
        <taxon>Saccharomycetes</taxon>
        <taxon>Saccharomycetales</taxon>
        <taxon>Saccharomycetaceae</taxon>
        <taxon>Saccharomyces</taxon>
    </lineage>
</organism>
<comment type="function">
    <text evidence="3 4">Involved in the recruitment of clathrin to the Golgi network and endosomes to form clathrin coated vesicles. Plays a role in the trafficking of clathrin between the Golgi network and endosomes. Binds to membranes enriched in phosphatidylinositol-3,5-bisphosphate (PtdIns(3,5)P2) and, in association with VPS27, is involved in protein sorting at the multivesicular body (MVB).</text>
</comment>
<comment type="subunit">
    <text evidence="3 4">Interacts with the clathrin adapter GGA2, and VPS27.</text>
</comment>
<comment type="interaction">
    <interactant intactId="EBI-25662">
        <id>P47160</id>
    </interactant>
    <interactant intactId="EBI-20519">
        <id>Q04338</id>
        <label>VTI1</label>
    </interactant>
    <organismsDiffer>false</organismsDiffer>
    <experiments>7</experiments>
</comment>
<comment type="subcellular location">
    <subcellularLocation>
        <location evidence="3">Cytoplasm</location>
    </subcellularLocation>
    <subcellularLocation>
        <location evidence="3">Golgi apparatus</location>
        <location evidence="3">trans-Golgi network membrane</location>
        <topology evidence="3">Peripheral membrane protein</topology>
    </subcellularLocation>
    <subcellularLocation>
        <location evidence="3">Cytoplasmic vesicle</location>
        <location evidence="3">Clathrin-coated vesicle membrane</location>
        <topology evidence="3">Peripheral membrane protein</topology>
    </subcellularLocation>
    <text>Associates with the trans Golgi network (TGN) and endosomal clathrin coats.</text>
</comment>
<name>ENT3_YEAST</name>
<protein>
    <recommendedName>
        <fullName>Epsin-3</fullName>
    </recommendedName>
</protein>
<evidence type="ECO:0000255" key="1">
    <source>
        <dbReference type="PROSITE-ProRule" id="PRU00243"/>
    </source>
</evidence>
<evidence type="ECO:0000256" key="2">
    <source>
        <dbReference type="SAM" id="MobiDB-lite"/>
    </source>
</evidence>
<evidence type="ECO:0000269" key="3">
    <source>
    </source>
</evidence>
<evidence type="ECO:0000269" key="4">
    <source>
    </source>
</evidence>
<evidence type="ECO:0007744" key="5">
    <source>
    </source>
</evidence>
<evidence type="ECO:0007744" key="6">
    <source>
    </source>
</evidence>
<evidence type="ECO:0007744" key="7">
    <source>
    </source>
</evidence>
<evidence type="ECO:0007744" key="8">
    <source>
    </source>
</evidence>
<evidence type="ECO:0007829" key="9">
    <source>
        <dbReference type="PDB" id="3ONK"/>
    </source>
</evidence>
<evidence type="ECO:0007829" key="10">
    <source>
        <dbReference type="PDB" id="3ONL"/>
    </source>
</evidence>
<feature type="initiator methionine" description="Removed" evidence="8">
    <location>
        <position position="1"/>
    </location>
</feature>
<feature type="chain" id="PRO_0000074526" description="Epsin-3">
    <location>
        <begin position="2"/>
        <end position="408"/>
    </location>
</feature>
<feature type="domain" description="ENTH" evidence="1">
    <location>
        <begin position="24"/>
        <end position="157"/>
    </location>
</feature>
<feature type="region of interest" description="Disordered" evidence="2">
    <location>
        <begin position="162"/>
        <end position="182"/>
    </location>
</feature>
<feature type="region of interest" description="Disordered" evidence="2">
    <location>
        <begin position="199"/>
        <end position="322"/>
    </location>
</feature>
<feature type="region of interest" description="Disordered" evidence="2">
    <location>
        <begin position="338"/>
        <end position="408"/>
    </location>
</feature>
<feature type="compositionally biased region" description="Acidic residues" evidence="2">
    <location>
        <begin position="201"/>
        <end position="210"/>
    </location>
</feature>
<feature type="compositionally biased region" description="Polar residues" evidence="2">
    <location>
        <begin position="211"/>
        <end position="231"/>
    </location>
</feature>
<feature type="compositionally biased region" description="Basic and acidic residues" evidence="2">
    <location>
        <begin position="249"/>
        <end position="263"/>
    </location>
</feature>
<feature type="compositionally biased region" description="Acidic residues" evidence="2">
    <location>
        <begin position="264"/>
        <end position="273"/>
    </location>
</feature>
<feature type="compositionally biased region" description="Polar residues" evidence="2">
    <location>
        <begin position="279"/>
        <end position="317"/>
    </location>
</feature>
<feature type="compositionally biased region" description="Low complexity" evidence="2">
    <location>
        <begin position="338"/>
        <end position="361"/>
    </location>
</feature>
<feature type="compositionally biased region" description="Polar residues" evidence="2">
    <location>
        <begin position="362"/>
        <end position="371"/>
    </location>
</feature>
<feature type="compositionally biased region" description="Polar residues" evidence="2">
    <location>
        <begin position="388"/>
        <end position="398"/>
    </location>
</feature>
<feature type="compositionally biased region" description="Basic and acidic residues" evidence="2">
    <location>
        <begin position="399"/>
        <end position="408"/>
    </location>
</feature>
<feature type="modified residue" description="N-acetylserine" evidence="8">
    <location>
        <position position="2"/>
    </location>
</feature>
<feature type="modified residue" description="Phosphoserine" evidence="7">
    <location>
        <position position="196"/>
    </location>
</feature>
<feature type="modified residue" description="Phosphoserine" evidence="7">
    <location>
        <position position="198"/>
    </location>
</feature>
<feature type="modified residue" description="Phosphoserine" evidence="5 6 7">
    <location>
        <position position="203"/>
    </location>
</feature>
<feature type="modified residue" description="Phosphoserine" evidence="7">
    <location>
        <position position="212"/>
    </location>
</feature>
<feature type="modified residue" description="Phosphoserine" evidence="7">
    <location>
        <position position="223"/>
    </location>
</feature>
<feature type="mutagenesis site" description="Reduced binding to GGA2." evidence="3">
    <original>F</original>
    <variation>A</variation>
    <location>
        <position position="272"/>
    </location>
</feature>
<feature type="mutagenesis site" description="Reduced binding to GGA2." evidence="3">
    <original>F</original>
    <variation>A</variation>
    <location>
        <position position="275"/>
    </location>
</feature>
<feature type="helix" evidence="9">
    <location>
        <begin position="31"/>
        <end position="39"/>
    </location>
</feature>
<feature type="helix" evidence="9">
    <location>
        <begin position="49"/>
        <end position="58"/>
    </location>
</feature>
<feature type="helix" evidence="9">
    <location>
        <begin position="62"/>
        <end position="77"/>
    </location>
</feature>
<feature type="helix" evidence="10">
    <location>
        <begin position="81"/>
        <end position="83"/>
    </location>
</feature>
<feature type="helix" evidence="9">
    <location>
        <begin position="84"/>
        <end position="100"/>
    </location>
</feature>
<feature type="helix" evidence="9">
    <location>
        <begin position="103"/>
        <end position="110"/>
    </location>
</feature>
<feature type="helix" evidence="9">
    <location>
        <begin position="113"/>
        <end position="117"/>
    </location>
</feature>
<feature type="helix" evidence="9">
    <location>
        <begin position="118"/>
        <end position="121"/>
    </location>
</feature>
<feature type="helix" evidence="9">
    <location>
        <begin position="133"/>
        <end position="147"/>
    </location>
</feature>
<feature type="helix" evidence="9">
    <location>
        <begin position="150"/>
        <end position="162"/>
    </location>
</feature>